<reference key="1">
    <citation type="submission" date="2003-06" db="EMBL/GenBank/DDBJ databases">
        <title>The complete genome sequence of Haemophilus ducreyi.</title>
        <authorList>
            <person name="Munson R.S. Jr."/>
            <person name="Ray W.C."/>
            <person name="Mahairas G."/>
            <person name="Sabo P."/>
            <person name="Mungur R."/>
            <person name="Johnson L."/>
            <person name="Nguyen D."/>
            <person name="Wang J."/>
            <person name="Forst C."/>
            <person name="Hood L."/>
        </authorList>
    </citation>
    <scope>NUCLEOTIDE SEQUENCE [LARGE SCALE GENOMIC DNA]</scope>
    <source>
        <strain>35000HP / ATCC 700724</strain>
    </source>
</reference>
<keyword id="KW-0067">ATP-binding</keyword>
<keyword id="KW-0963">Cytoplasm</keyword>
<keyword id="KW-0547">Nucleotide-binding</keyword>
<keyword id="KW-0548">Nucleotidyltransferase</keyword>
<keyword id="KW-1185">Reference proteome</keyword>
<keyword id="KW-0808">Transferase</keyword>
<keyword id="KW-0819">tRNA processing</keyword>
<protein>
    <recommendedName>
        <fullName evidence="1">Threonylcarbamoyl-AMP synthase</fullName>
        <shortName evidence="1">TC-AMP synthase</shortName>
        <ecNumber evidence="1">2.7.7.87</ecNumber>
    </recommendedName>
    <alternativeName>
        <fullName evidence="1">L-threonylcarbamoyladenylate synthase</fullName>
    </alternativeName>
    <alternativeName>
        <fullName evidence="1">t(6)A37 threonylcarbamoyladenosine biosynthesis protein TsaC</fullName>
    </alternativeName>
    <alternativeName>
        <fullName evidence="1">tRNA threonylcarbamoyladenosine biosynthesis protein TsaC</fullName>
    </alternativeName>
</protein>
<gene>
    <name evidence="1" type="primary">tsaC</name>
    <name type="synonym">rimN</name>
    <name type="ordered locus">HD_0414</name>
</gene>
<feature type="chain" id="PRO_0000352922" description="Threonylcarbamoyl-AMP synthase">
    <location>
        <begin position="1"/>
        <end position="184"/>
    </location>
</feature>
<feature type="domain" description="YrdC-like" evidence="1">
    <location>
        <begin position="1"/>
        <end position="184"/>
    </location>
</feature>
<name>TSAC_HAEDU</name>
<proteinExistence type="inferred from homology"/>
<organism>
    <name type="scientific">Haemophilus ducreyi (strain 35000HP / ATCC 700724)</name>
    <dbReference type="NCBI Taxonomy" id="233412"/>
    <lineage>
        <taxon>Bacteria</taxon>
        <taxon>Pseudomonadati</taxon>
        <taxon>Pseudomonadota</taxon>
        <taxon>Gammaproteobacteria</taxon>
        <taxon>Pasteurellales</taxon>
        <taxon>Pasteurellaceae</taxon>
        <taxon>Haemophilus</taxon>
    </lineage>
</organism>
<accession>Q7VNS3</accession>
<comment type="function">
    <text evidence="1">Required for the formation of a threonylcarbamoyl group on adenosine at position 37 (t(6)A37) in tRNAs that read codons beginning with adenine. Catalyzes the conversion of L-threonine, HCO(3)(-)/CO(2) and ATP to give threonylcarbamoyl-AMP (TC-AMP) as the acyladenylate intermediate, with the release of diphosphate.</text>
</comment>
<comment type="catalytic activity">
    <reaction evidence="1">
        <text>L-threonine + hydrogencarbonate + ATP = L-threonylcarbamoyladenylate + diphosphate + H2O</text>
        <dbReference type="Rhea" id="RHEA:36407"/>
        <dbReference type="ChEBI" id="CHEBI:15377"/>
        <dbReference type="ChEBI" id="CHEBI:17544"/>
        <dbReference type="ChEBI" id="CHEBI:30616"/>
        <dbReference type="ChEBI" id="CHEBI:33019"/>
        <dbReference type="ChEBI" id="CHEBI:57926"/>
        <dbReference type="ChEBI" id="CHEBI:73682"/>
        <dbReference type="EC" id="2.7.7.87"/>
    </reaction>
</comment>
<comment type="subcellular location">
    <subcellularLocation>
        <location evidence="1">Cytoplasm</location>
    </subcellularLocation>
</comment>
<comment type="similarity">
    <text evidence="1">Belongs to the SUA5 family. TsaC subfamily.</text>
</comment>
<sequence>MNNLLAVIELLKQNQVVAYPTESVFGLGCNPNNEEAIRQLLQLKNRPIEKGLILVAPTKELLLPYIDESQLTEKHWQRFDTITEQAVTWIMPVHKNVSHYLTGKFNTIAVRLCRVPAVVKLCESLGFALTSTSANFTGLPPCRTALEVKQQFGDHFPVLEAETGNRMNPSEIRDIFTQHIFRQG</sequence>
<evidence type="ECO:0000255" key="1">
    <source>
        <dbReference type="HAMAP-Rule" id="MF_01852"/>
    </source>
</evidence>
<dbReference type="EC" id="2.7.7.87" evidence="1"/>
<dbReference type="EMBL" id="AE017143">
    <property type="protein sequence ID" value="AAP95379.1"/>
    <property type="molecule type" value="Genomic_DNA"/>
</dbReference>
<dbReference type="RefSeq" id="WP_010944432.1">
    <property type="nucleotide sequence ID" value="NC_002940.2"/>
</dbReference>
<dbReference type="SMR" id="Q7VNS3"/>
<dbReference type="STRING" id="233412.HD_0414"/>
<dbReference type="KEGG" id="hdu:HD_0414"/>
<dbReference type="eggNOG" id="COG0009">
    <property type="taxonomic scope" value="Bacteria"/>
</dbReference>
<dbReference type="HOGENOM" id="CLU_031397_6_0_6"/>
<dbReference type="OrthoDB" id="9814580at2"/>
<dbReference type="Proteomes" id="UP000001022">
    <property type="component" value="Chromosome"/>
</dbReference>
<dbReference type="GO" id="GO:0005737">
    <property type="term" value="C:cytoplasm"/>
    <property type="evidence" value="ECO:0007669"/>
    <property type="project" value="UniProtKB-SubCell"/>
</dbReference>
<dbReference type="GO" id="GO:0005524">
    <property type="term" value="F:ATP binding"/>
    <property type="evidence" value="ECO:0007669"/>
    <property type="project" value="UniProtKB-UniRule"/>
</dbReference>
<dbReference type="GO" id="GO:0003725">
    <property type="term" value="F:double-stranded RNA binding"/>
    <property type="evidence" value="ECO:0007669"/>
    <property type="project" value="InterPro"/>
</dbReference>
<dbReference type="GO" id="GO:0061710">
    <property type="term" value="F:L-threonylcarbamoyladenylate synthase"/>
    <property type="evidence" value="ECO:0007669"/>
    <property type="project" value="UniProtKB-EC"/>
</dbReference>
<dbReference type="GO" id="GO:0000049">
    <property type="term" value="F:tRNA binding"/>
    <property type="evidence" value="ECO:0007669"/>
    <property type="project" value="TreeGrafter"/>
</dbReference>
<dbReference type="GO" id="GO:0006450">
    <property type="term" value="P:regulation of translational fidelity"/>
    <property type="evidence" value="ECO:0007669"/>
    <property type="project" value="TreeGrafter"/>
</dbReference>
<dbReference type="GO" id="GO:0002949">
    <property type="term" value="P:tRNA threonylcarbamoyladenosine modification"/>
    <property type="evidence" value="ECO:0007669"/>
    <property type="project" value="UniProtKB-UniRule"/>
</dbReference>
<dbReference type="FunFam" id="3.90.870.10:FF:000004">
    <property type="entry name" value="Threonylcarbamoyl-AMP synthase"/>
    <property type="match status" value="1"/>
</dbReference>
<dbReference type="Gene3D" id="3.90.870.10">
    <property type="entry name" value="DHBP synthase"/>
    <property type="match status" value="1"/>
</dbReference>
<dbReference type="HAMAP" id="MF_01852">
    <property type="entry name" value="TsaC"/>
    <property type="match status" value="1"/>
</dbReference>
<dbReference type="InterPro" id="IPR017945">
    <property type="entry name" value="DHBP_synth_RibB-like_a/b_dom"/>
</dbReference>
<dbReference type="InterPro" id="IPR006070">
    <property type="entry name" value="Sua5-like_dom"/>
</dbReference>
<dbReference type="InterPro" id="IPR023535">
    <property type="entry name" value="TC-AMP_synthase"/>
</dbReference>
<dbReference type="InterPro" id="IPR050156">
    <property type="entry name" value="TC-AMP_synthase_SUA5"/>
</dbReference>
<dbReference type="PANTHER" id="PTHR17490">
    <property type="entry name" value="SUA5"/>
    <property type="match status" value="1"/>
</dbReference>
<dbReference type="PANTHER" id="PTHR17490:SF18">
    <property type="entry name" value="THREONYLCARBAMOYL-AMP SYNTHASE"/>
    <property type="match status" value="1"/>
</dbReference>
<dbReference type="Pfam" id="PF01300">
    <property type="entry name" value="Sua5_yciO_yrdC"/>
    <property type="match status" value="1"/>
</dbReference>
<dbReference type="SUPFAM" id="SSF55821">
    <property type="entry name" value="YrdC/RibB"/>
    <property type="match status" value="1"/>
</dbReference>
<dbReference type="PROSITE" id="PS51163">
    <property type="entry name" value="YRDC"/>
    <property type="match status" value="1"/>
</dbReference>